<keyword id="KW-1185">Reference proteome</keyword>
<protein>
    <recommendedName>
        <fullName>Putative uncharacterized protein DDB_G0276433</fullName>
    </recommendedName>
</protein>
<sequence length="48" mass="4938">MSRRMGGGMPKINLSGAIPNNNTSTPSTPTLRSSVSVSSSNSRGLFLA</sequence>
<gene>
    <name type="ORF">DDB_G0276433</name>
</gene>
<name>Y7068_DICDI</name>
<feature type="chain" id="PRO_0000348115" description="Putative uncharacterized protein DDB_G0276433">
    <location>
        <begin position="1"/>
        <end position="48"/>
    </location>
</feature>
<feature type="region of interest" description="Disordered" evidence="1">
    <location>
        <begin position="1"/>
        <end position="48"/>
    </location>
</feature>
<feature type="compositionally biased region" description="Low complexity" evidence="1">
    <location>
        <begin position="20"/>
        <end position="48"/>
    </location>
</feature>
<organism>
    <name type="scientific">Dictyostelium discoideum</name>
    <name type="common">Social amoeba</name>
    <dbReference type="NCBI Taxonomy" id="44689"/>
    <lineage>
        <taxon>Eukaryota</taxon>
        <taxon>Amoebozoa</taxon>
        <taxon>Evosea</taxon>
        <taxon>Eumycetozoa</taxon>
        <taxon>Dictyostelia</taxon>
        <taxon>Dictyosteliales</taxon>
        <taxon>Dictyosteliaceae</taxon>
        <taxon>Dictyostelium</taxon>
    </lineage>
</organism>
<proteinExistence type="predicted"/>
<evidence type="ECO:0000256" key="1">
    <source>
        <dbReference type="SAM" id="MobiDB-lite"/>
    </source>
</evidence>
<accession>Q86HW0</accession>
<accession>Q551K2</accession>
<reference key="1">
    <citation type="journal article" date="2002" name="Nature">
        <title>Sequence and analysis of chromosome 2 of Dictyostelium discoideum.</title>
        <authorList>
            <person name="Gloeckner G."/>
            <person name="Eichinger L."/>
            <person name="Szafranski K."/>
            <person name="Pachebat J.A."/>
            <person name="Bankier A.T."/>
            <person name="Dear P.H."/>
            <person name="Lehmann R."/>
            <person name="Baumgart C."/>
            <person name="Parra G."/>
            <person name="Abril J.F."/>
            <person name="Guigo R."/>
            <person name="Kumpf K."/>
            <person name="Tunggal B."/>
            <person name="Cox E.C."/>
            <person name="Quail M.A."/>
            <person name="Platzer M."/>
            <person name="Rosenthal A."/>
            <person name="Noegel A.A."/>
        </authorList>
    </citation>
    <scope>NUCLEOTIDE SEQUENCE [LARGE SCALE GENOMIC DNA]</scope>
    <source>
        <strain>AX4</strain>
    </source>
</reference>
<reference key="2">
    <citation type="journal article" date="2005" name="Nature">
        <title>The genome of the social amoeba Dictyostelium discoideum.</title>
        <authorList>
            <person name="Eichinger L."/>
            <person name="Pachebat J.A."/>
            <person name="Gloeckner G."/>
            <person name="Rajandream M.A."/>
            <person name="Sucgang R."/>
            <person name="Berriman M."/>
            <person name="Song J."/>
            <person name="Olsen R."/>
            <person name="Szafranski K."/>
            <person name="Xu Q."/>
            <person name="Tunggal B."/>
            <person name="Kummerfeld S."/>
            <person name="Madera M."/>
            <person name="Konfortov B.A."/>
            <person name="Rivero F."/>
            <person name="Bankier A.T."/>
            <person name="Lehmann R."/>
            <person name="Hamlin N."/>
            <person name="Davies R."/>
            <person name="Gaudet P."/>
            <person name="Fey P."/>
            <person name="Pilcher K."/>
            <person name="Chen G."/>
            <person name="Saunders D."/>
            <person name="Sodergren E.J."/>
            <person name="Davis P."/>
            <person name="Kerhornou A."/>
            <person name="Nie X."/>
            <person name="Hall N."/>
            <person name="Anjard C."/>
            <person name="Hemphill L."/>
            <person name="Bason N."/>
            <person name="Farbrother P."/>
            <person name="Desany B."/>
            <person name="Just E."/>
            <person name="Morio T."/>
            <person name="Rost R."/>
            <person name="Churcher C.M."/>
            <person name="Cooper J."/>
            <person name="Haydock S."/>
            <person name="van Driessche N."/>
            <person name="Cronin A."/>
            <person name="Goodhead I."/>
            <person name="Muzny D.M."/>
            <person name="Mourier T."/>
            <person name="Pain A."/>
            <person name="Lu M."/>
            <person name="Harper D."/>
            <person name="Lindsay R."/>
            <person name="Hauser H."/>
            <person name="James K.D."/>
            <person name="Quiles M."/>
            <person name="Madan Babu M."/>
            <person name="Saito T."/>
            <person name="Buchrieser C."/>
            <person name="Wardroper A."/>
            <person name="Felder M."/>
            <person name="Thangavelu M."/>
            <person name="Johnson D."/>
            <person name="Knights A."/>
            <person name="Loulseged H."/>
            <person name="Mungall K.L."/>
            <person name="Oliver K."/>
            <person name="Price C."/>
            <person name="Quail M.A."/>
            <person name="Urushihara H."/>
            <person name="Hernandez J."/>
            <person name="Rabbinowitsch E."/>
            <person name="Steffen D."/>
            <person name="Sanders M."/>
            <person name="Ma J."/>
            <person name="Kohara Y."/>
            <person name="Sharp S."/>
            <person name="Simmonds M.N."/>
            <person name="Spiegler S."/>
            <person name="Tivey A."/>
            <person name="Sugano S."/>
            <person name="White B."/>
            <person name="Walker D."/>
            <person name="Woodward J.R."/>
            <person name="Winckler T."/>
            <person name="Tanaka Y."/>
            <person name="Shaulsky G."/>
            <person name="Schleicher M."/>
            <person name="Weinstock G.M."/>
            <person name="Rosenthal A."/>
            <person name="Cox E.C."/>
            <person name="Chisholm R.L."/>
            <person name="Gibbs R.A."/>
            <person name="Loomis W.F."/>
            <person name="Platzer M."/>
            <person name="Kay R.R."/>
            <person name="Williams J.G."/>
            <person name="Dear P.H."/>
            <person name="Noegel A.A."/>
            <person name="Barrell B.G."/>
            <person name="Kuspa A."/>
        </authorList>
    </citation>
    <scope>NUCLEOTIDE SEQUENCE [LARGE SCALE GENOMIC DNA]</scope>
    <source>
        <strain>AX4</strain>
    </source>
</reference>
<dbReference type="EMBL" id="AAFI02000015">
    <property type="protein sequence ID" value="EAL69170.1"/>
    <property type="molecule type" value="Genomic_DNA"/>
</dbReference>
<dbReference type="RefSeq" id="XP_643132.1">
    <property type="nucleotide sequence ID" value="XM_638040.1"/>
</dbReference>
<dbReference type="GlyGen" id="Q86HW0">
    <property type="glycosylation" value="1 site"/>
</dbReference>
<dbReference type="PaxDb" id="44689-DDB0167068"/>
<dbReference type="EnsemblProtists" id="EAL69170">
    <property type="protein sequence ID" value="EAL69170"/>
    <property type="gene ID" value="DDB_G0276433"/>
</dbReference>
<dbReference type="GeneID" id="8620538"/>
<dbReference type="KEGG" id="ddi:DDB_G0276433"/>
<dbReference type="dictyBase" id="DDB_G0276433"/>
<dbReference type="HOGENOM" id="CLU_3161075_0_0_1"/>
<dbReference type="InParanoid" id="Q86HW0"/>
<dbReference type="PRO" id="PR:Q86HW0"/>
<dbReference type="Proteomes" id="UP000002195">
    <property type="component" value="Chromosome 2"/>
</dbReference>